<proteinExistence type="predicted"/>
<name>YF012_YEAST</name>
<dbReference type="EMBL" id="D50617">
    <property type="status" value="NOT_ANNOTATED_CDS"/>
    <property type="molecule type" value="Genomic_DNA"/>
</dbReference>
<dbReference type="EMBL" id="BK006940">
    <property type="protein sequence ID" value="DAA12453.1"/>
    <property type="molecule type" value="Genomic_DNA"/>
</dbReference>
<dbReference type="RefSeq" id="NP_076889.1">
    <property type="nucleotide sequence ID" value="NM_001184472.1"/>
</dbReference>
<dbReference type="BioGRID" id="31164">
    <property type="interactions" value="1"/>
</dbReference>
<dbReference type="FunCoup" id="Q3E838">
    <property type="interactions" value="7"/>
</dbReference>
<dbReference type="STRING" id="4932.YFR012W-A"/>
<dbReference type="PaxDb" id="4932-YFR012W-A"/>
<dbReference type="EnsemblFungi" id="YFR012W-A_mRNA">
    <property type="protein sequence ID" value="YFR012W-A"/>
    <property type="gene ID" value="YFR012W-A"/>
</dbReference>
<dbReference type="GeneID" id="850566"/>
<dbReference type="KEGG" id="sce:YFR012W-A"/>
<dbReference type="AGR" id="SGD:S000007606"/>
<dbReference type="SGD" id="S000007606">
    <property type="gene designation" value="YFR012W-A"/>
</dbReference>
<dbReference type="VEuPathDB" id="FungiDB:YFR012W-A"/>
<dbReference type="HOGENOM" id="CLU_3413160_0_0_1"/>
<dbReference type="InParanoid" id="Q3E838"/>
<dbReference type="BioCyc" id="YEAST:G3O-30518-MONOMER"/>
<dbReference type="BioGRID-ORCS" id="850566">
    <property type="hits" value="5 hits in 10 CRISPR screens"/>
</dbReference>
<dbReference type="PRO" id="PR:Q3E838"/>
<dbReference type="Proteomes" id="UP000002311">
    <property type="component" value="Chromosome VI"/>
</dbReference>
<sequence>MLPRKYKPAYKKQAHRVKSNPQPAYTFQ</sequence>
<gene>
    <name type="ordered locus">YFR012W-A</name>
</gene>
<accession>Q3E838</accession>
<accession>D6VTP3</accession>
<keyword id="KW-1185">Reference proteome</keyword>
<organism>
    <name type="scientific">Saccharomyces cerevisiae (strain ATCC 204508 / S288c)</name>
    <name type="common">Baker's yeast</name>
    <dbReference type="NCBI Taxonomy" id="559292"/>
    <lineage>
        <taxon>Eukaryota</taxon>
        <taxon>Fungi</taxon>
        <taxon>Dikarya</taxon>
        <taxon>Ascomycota</taxon>
        <taxon>Saccharomycotina</taxon>
        <taxon>Saccharomycetes</taxon>
        <taxon>Saccharomycetales</taxon>
        <taxon>Saccharomycetaceae</taxon>
        <taxon>Saccharomyces</taxon>
    </lineage>
</organism>
<evidence type="ECO:0000256" key="1">
    <source>
        <dbReference type="SAM" id="MobiDB-lite"/>
    </source>
</evidence>
<protein>
    <recommendedName>
        <fullName>Uncharacterized protein YFR012W-A</fullName>
    </recommendedName>
</protein>
<reference key="1">
    <citation type="journal article" date="1995" name="Nat. Genet.">
        <title>Analysis of the nucleotide sequence of chromosome VI from Saccharomyces cerevisiae.</title>
        <authorList>
            <person name="Murakami Y."/>
            <person name="Naitou M."/>
            <person name="Hagiwara H."/>
            <person name="Shibata T."/>
            <person name="Ozawa M."/>
            <person name="Sasanuma S."/>
            <person name="Sasanuma M."/>
            <person name="Tsuchiya Y."/>
            <person name="Soeda E."/>
            <person name="Yokoyama K."/>
            <person name="Yamazaki M."/>
            <person name="Tashiro H."/>
            <person name="Eki T."/>
        </authorList>
    </citation>
    <scope>NUCLEOTIDE SEQUENCE [LARGE SCALE GENOMIC DNA]</scope>
    <source>
        <strain>ATCC 204508 / S288c</strain>
    </source>
</reference>
<reference key="2">
    <citation type="journal article" date="2014" name="G3 (Bethesda)">
        <title>The reference genome sequence of Saccharomyces cerevisiae: Then and now.</title>
        <authorList>
            <person name="Engel S.R."/>
            <person name="Dietrich F.S."/>
            <person name="Fisk D.G."/>
            <person name="Binkley G."/>
            <person name="Balakrishnan R."/>
            <person name="Costanzo M.C."/>
            <person name="Dwight S.S."/>
            <person name="Hitz B.C."/>
            <person name="Karra K."/>
            <person name="Nash R.S."/>
            <person name="Weng S."/>
            <person name="Wong E.D."/>
            <person name="Lloyd P."/>
            <person name="Skrzypek M.S."/>
            <person name="Miyasato S.R."/>
            <person name="Simison M."/>
            <person name="Cherry J.M."/>
        </authorList>
    </citation>
    <scope>GENOME REANNOTATION</scope>
    <source>
        <strain>ATCC 204508 / S288c</strain>
    </source>
</reference>
<reference key="3">
    <citation type="journal article" date="2000" name="FEBS Lett.">
        <title>Genomic exploration of the hemiascomycetous yeasts: 4. The genome of Saccharomyces cerevisiae revisited.</title>
        <authorList>
            <person name="Blandin G."/>
            <person name="Durrens P."/>
            <person name="Tekaia F."/>
            <person name="Aigle M."/>
            <person name="Bolotin-Fukuhara M."/>
            <person name="Bon E."/>
            <person name="Casaregola S."/>
            <person name="de Montigny J."/>
            <person name="Gaillardin C."/>
            <person name="Lepingle A."/>
            <person name="Llorente B."/>
            <person name="Malpertuy A."/>
            <person name="Neuveglise C."/>
            <person name="Ozier-Kalogeropoulos O."/>
            <person name="Perrin A."/>
            <person name="Potier S."/>
            <person name="Souciet J.-L."/>
            <person name="Talla E."/>
            <person name="Toffano-Nioche C."/>
            <person name="Wesolowski-Louvel M."/>
            <person name="Marck C."/>
            <person name="Dujon B."/>
        </authorList>
    </citation>
    <scope>GENOME REANNOTATION</scope>
</reference>
<feature type="chain" id="PRO_0000245374" description="Uncharacterized protein YFR012W-A">
    <location>
        <begin position="1"/>
        <end position="28"/>
    </location>
</feature>
<feature type="region of interest" description="Disordered" evidence="1">
    <location>
        <begin position="1"/>
        <end position="28"/>
    </location>
</feature>
<feature type="compositionally biased region" description="Basic residues" evidence="1">
    <location>
        <begin position="1"/>
        <end position="18"/>
    </location>
</feature>
<feature type="compositionally biased region" description="Polar residues" evidence="1">
    <location>
        <begin position="19"/>
        <end position="28"/>
    </location>
</feature>